<organism>
    <name type="scientific">Homo sapiens</name>
    <name type="common">Human</name>
    <dbReference type="NCBI Taxonomy" id="9606"/>
    <lineage>
        <taxon>Eukaryota</taxon>
        <taxon>Metazoa</taxon>
        <taxon>Chordata</taxon>
        <taxon>Craniata</taxon>
        <taxon>Vertebrata</taxon>
        <taxon>Euteleostomi</taxon>
        <taxon>Mammalia</taxon>
        <taxon>Eutheria</taxon>
        <taxon>Euarchontoglires</taxon>
        <taxon>Primates</taxon>
        <taxon>Haplorrhini</taxon>
        <taxon>Catarrhini</taxon>
        <taxon>Hominidae</taxon>
        <taxon>Homo</taxon>
    </lineage>
</organism>
<feature type="signal peptide" evidence="2">
    <location>
        <begin position="1"/>
        <end position="22"/>
    </location>
</feature>
<feature type="chain" id="PRO_0000045369" description="Beta-defensin 130A">
    <location>
        <begin position="23"/>
        <end position="79"/>
    </location>
</feature>
<feature type="disulfide bond" evidence="1">
    <location>
        <begin position="38"/>
        <end position="53"/>
    </location>
</feature>
<feature type="disulfide bond" evidence="1">
    <location>
        <begin position="43"/>
        <end position="60"/>
    </location>
</feature>
<gene>
    <name evidence="6" type="primary">DEFB130A</name>
    <name evidence="6" type="synonym">DEFB130</name>
    <name type="synonym">DEFB30</name>
</gene>
<accession>P0DP74</accession>
<accession>Q30KQ2</accession>
<protein>
    <recommendedName>
        <fullName evidence="5">Beta-defensin 130A</fullName>
    </recommendedName>
    <alternativeName>
        <fullName evidence="4">Beta-defensin 130</fullName>
    </alternativeName>
    <alternativeName>
        <fullName>Beta-defensin 30</fullName>
        <shortName>DEFB-30</shortName>
    </alternativeName>
    <alternativeName>
        <fullName evidence="6">Defensin, beta 130</fullName>
    </alternativeName>
</protein>
<name>D130A_HUMAN</name>
<comment type="function">
    <text evidence="3">Antimicrobial host-defense peptide. Has an antiplasmodial activity.</text>
</comment>
<comment type="subcellular location">
    <subcellularLocation>
        <location evidence="5">Secreted</location>
    </subcellularLocation>
</comment>
<comment type="tissue specificity">
    <text evidence="3">Expressed on differentiated macrophage phagocytizing plasmodium falciparum-parasitized erythrocytes.</text>
</comment>
<comment type="similarity">
    <text evidence="5">Belongs to the beta-defensin family.</text>
</comment>
<reference key="1">
    <citation type="journal article" date="2005" name="Physiol. Genomics">
        <title>Cross-species analysis of the mammalian beta-defensin gene family: presence of syntenic gene clusters and preferential expression in the male reproductive tract.</title>
        <authorList>
            <person name="Patil A.A."/>
            <person name="Cai Y."/>
            <person name="Sang Y."/>
            <person name="Blecha F."/>
            <person name="Zhang G."/>
        </authorList>
    </citation>
    <scope>NUCLEOTIDE SEQUENCE [MRNA]</scope>
</reference>
<reference key="2">
    <citation type="journal article" date="2006" name="Nature">
        <title>DNA sequence and analysis of human chromosome 8.</title>
        <authorList>
            <person name="Nusbaum C."/>
            <person name="Mikkelsen T.S."/>
            <person name="Zody M.C."/>
            <person name="Asakawa S."/>
            <person name="Taudien S."/>
            <person name="Garber M."/>
            <person name="Kodira C.D."/>
            <person name="Schueler M.G."/>
            <person name="Shimizu A."/>
            <person name="Whittaker C.A."/>
            <person name="Chang J.L."/>
            <person name="Cuomo C.A."/>
            <person name="Dewar K."/>
            <person name="FitzGerald M.G."/>
            <person name="Yang X."/>
            <person name="Allen N.R."/>
            <person name="Anderson S."/>
            <person name="Asakawa T."/>
            <person name="Blechschmidt K."/>
            <person name="Bloom T."/>
            <person name="Borowsky M.L."/>
            <person name="Butler J."/>
            <person name="Cook A."/>
            <person name="Corum B."/>
            <person name="DeArellano K."/>
            <person name="DeCaprio D."/>
            <person name="Dooley K.T."/>
            <person name="Dorris L. III"/>
            <person name="Engels R."/>
            <person name="Gloeckner G."/>
            <person name="Hafez N."/>
            <person name="Hagopian D.S."/>
            <person name="Hall J.L."/>
            <person name="Ishikawa S.K."/>
            <person name="Jaffe D.B."/>
            <person name="Kamat A."/>
            <person name="Kudoh J."/>
            <person name="Lehmann R."/>
            <person name="Lokitsang T."/>
            <person name="Macdonald P."/>
            <person name="Major J.E."/>
            <person name="Matthews C.D."/>
            <person name="Mauceli E."/>
            <person name="Menzel U."/>
            <person name="Mihalev A.H."/>
            <person name="Minoshima S."/>
            <person name="Murayama Y."/>
            <person name="Naylor J.W."/>
            <person name="Nicol R."/>
            <person name="Nguyen C."/>
            <person name="O'Leary S.B."/>
            <person name="O'Neill K."/>
            <person name="Parker S.C.J."/>
            <person name="Polley A."/>
            <person name="Raymond C.K."/>
            <person name="Reichwald K."/>
            <person name="Rodriguez J."/>
            <person name="Sasaki T."/>
            <person name="Schilhabel M."/>
            <person name="Siddiqui R."/>
            <person name="Smith C.L."/>
            <person name="Sneddon T.P."/>
            <person name="Talamas J.A."/>
            <person name="Tenzin P."/>
            <person name="Topham K."/>
            <person name="Venkataraman V."/>
            <person name="Wen G."/>
            <person name="Yamazaki S."/>
            <person name="Young S.K."/>
            <person name="Zeng Q."/>
            <person name="Zimmer A.R."/>
            <person name="Rosenthal A."/>
            <person name="Birren B.W."/>
            <person name="Platzer M."/>
            <person name="Shimizu N."/>
            <person name="Lander E.S."/>
        </authorList>
    </citation>
    <scope>NUCLEOTIDE SEQUENCE [LARGE SCALE GENOMIC DNA]</scope>
</reference>
<reference key="3">
    <citation type="journal article" date="2017" name="Sci. Rep.">
        <title>Involvement of beta-defensin 130 (DEFB130) in the macrophage microbicidal mechanisms for killing Plasmodium falciparum.</title>
        <authorList>
            <person name="Terkawi M.A."/>
            <person name="Takano R."/>
            <person name="Furukawa A."/>
            <person name="Murakoshi F."/>
            <person name="Kato K."/>
        </authorList>
    </citation>
    <scope>FUNCTION</scope>
    <scope>TISSUE SPECIFICITY</scope>
</reference>
<proteinExistence type="evidence at transcript level"/>
<sequence length="79" mass="8736">MKLHSLISVLLLFVTLIPKGKTGVIPGQKQCIALKGVCRDKLCSTLDDTIGICNEGKKCCRRWWILEPYPTPVPKGKSP</sequence>
<evidence type="ECO:0000250" key="1"/>
<evidence type="ECO:0000255" key="2"/>
<evidence type="ECO:0000269" key="3">
    <source>
    </source>
</evidence>
<evidence type="ECO:0000303" key="4">
    <source>
    </source>
</evidence>
<evidence type="ECO:0000305" key="5"/>
<evidence type="ECO:0000312" key="6">
    <source>
        <dbReference type="HGNC" id="HGNC:18107"/>
    </source>
</evidence>
<keyword id="KW-0044">Antibiotic</keyword>
<keyword id="KW-0929">Antimicrobial</keyword>
<keyword id="KW-0211">Defensin</keyword>
<keyword id="KW-1015">Disulfide bond</keyword>
<keyword id="KW-1185">Reference proteome</keyword>
<keyword id="KW-0964">Secreted</keyword>
<keyword id="KW-0732">Signal</keyword>
<dbReference type="EMBL" id="DQ012022">
    <property type="protein sequence ID" value="AAY59758.1"/>
    <property type="molecule type" value="mRNA"/>
</dbReference>
<dbReference type="EMBL" id="AC232308">
    <property type="status" value="NOT_ANNOTATED_CDS"/>
    <property type="molecule type" value="Genomic_DNA"/>
</dbReference>
<dbReference type="CCDS" id="CCDS43714.1"/>
<dbReference type="RefSeq" id="NP_001032893.1">
    <property type="nucleotide sequence ID" value="NM_001037804.1"/>
</dbReference>
<dbReference type="SMR" id="P0DP74"/>
<dbReference type="FunCoup" id="P0DP74">
    <property type="interactions" value="108"/>
</dbReference>
<dbReference type="STRING" id="9606.ENSP00000382951"/>
<dbReference type="GlyGen" id="P0DP74">
    <property type="glycosylation" value="1 site"/>
</dbReference>
<dbReference type="BioMuta" id="DEFB130A"/>
<dbReference type="MassIVE" id="P0DP74"/>
<dbReference type="PaxDb" id="9606-ENSP00000382951"/>
<dbReference type="Antibodypedia" id="77986">
    <property type="antibodies" value="2 antibodies from 2 providers"/>
</dbReference>
<dbReference type="DNASU" id="245940"/>
<dbReference type="Ensembl" id="ENST00000400079.1">
    <property type="protein sequence ID" value="ENSP00000382951.1"/>
    <property type="gene ID" value="ENSG00000232948.1"/>
</dbReference>
<dbReference type="GeneID" id="245940"/>
<dbReference type="KEGG" id="hsa:100133267"/>
<dbReference type="KEGG" id="hsa:245940"/>
<dbReference type="MANE-Select" id="ENST00000400079.1">
    <property type="protein sequence ID" value="ENSP00000382951.1"/>
    <property type="RefSeq nucleotide sequence ID" value="NM_001037804.1"/>
    <property type="RefSeq protein sequence ID" value="NP_001032893.1"/>
</dbReference>
<dbReference type="AGR" id="HGNC:18107"/>
<dbReference type="AGR" id="HGNC:39814"/>
<dbReference type="CTD" id="100133267"/>
<dbReference type="CTD" id="245940"/>
<dbReference type="DisGeNET" id="100133267"/>
<dbReference type="GeneCards" id="DEFB130A"/>
<dbReference type="HGNC" id="HGNC:18107">
    <property type="gene designation" value="DEFB130A"/>
</dbReference>
<dbReference type="HPA" id="ENSG00000232948">
    <property type="expression patterns" value="Tissue enriched (epididymis)"/>
</dbReference>
<dbReference type="neXtProt" id="NX_P0DP74"/>
<dbReference type="VEuPathDB" id="HostDB:ENSG00000232948"/>
<dbReference type="eggNOG" id="ENOG502TEXC">
    <property type="taxonomic scope" value="Eukaryota"/>
</dbReference>
<dbReference type="GeneTree" id="ENSGT00940000160995"/>
<dbReference type="InParanoid" id="P0DP74"/>
<dbReference type="OMA" id="KCCRIWW"/>
<dbReference type="OrthoDB" id="9542609at2759"/>
<dbReference type="PAN-GO" id="P0DP74">
    <property type="GO annotations" value="5 GO annotations based on evolutionary models"/>
</dbReference>
<dbReference type="PathwayCommons" id="P0DP74"/>
<dbReference type="Reactome" id="R-HSA-1461957">
    <property type="pathway name" value="Beta defensins"/>
</dbReference>
<dbReference type="Reactome" id="R-HSA-1461973">
    <property type="pathway name" value="Defensins"/>
</dbReference>
<dbReference type="Pharos" id="P0DP74">
    <property type="development level" value="Tbio"/>
</dbReference>
<dbReference type="PRO" id="PR:P0DP74"/>
<dbReference type="Proteomes" id="UP000005640">
    <property type="component" value="Chromosome 8"/>
</dbReference>
<dbReference type="RNAct" id="P0DP74">
    <property type="molecule type" value="protein"/>
</dbReference>
<dbReference type="Bgee" id="ENSG00000232948">
    <property type="expression patterns" value="Expressed in urinary bladder and 3 other cell types or tissues"/>
</dbReference>
<dbReference type="GO" id="GO:0005615">
    <property type="term" value="C:extracellular space"/>
    <property type="evidence" value="ECO:0000318"/>
    <property type="project" value="GO_Central"/>
</dbReference>
<dbReference type="GO" id="GO:0031731">
    <property type="term" value="F:CCR6 chemokine receptor binding"/>
    <property type="evidence" value="ECO:0000318"/>
    <property type="project" value="GO_Central"/>
</dbReference>
<dbReference type="GO" id="GO:0042056">
    <property type="term" value="F:chemoattractant activity"/>
    <property type="evidence" value="ECO:0000318"/>
    <property type="project" value="GO_Central"/>
</dbReference>
<dbReference type="GO" id="GO:0060326">
    <property type="term" value="P:cell chemotaxis"/>
    <property type="evidence" value="ECO:0000318"/>
    <property type="project" value="GO_Central"/>
</dbReference>
<dbReference type="GO" id="GO:0042742">
    <property type="term" value="P:defense response to bacterium"/>
    <property type="evidence" value="ECO:0000318"/>
    <property type="project" value="GO_Central"/>
</dbReference>
<dbReference type="InterPro" id="IPR001855">
    <property type="entry name" value="Defensin_beta-like"/>
</dbReference>
<dbReference type="PANTHER" id="PTHR20515">
    <property type="entry name" value="BETA-DEFENSIN"/>
    <property type="match status" value="1"/>
</dbReference>
<dbReference type="PANTHER" id="PTHR20515:SF1">
    <property type="entry name" value="BETA-DEFENSIN 130A-RELATED"/>
    <property type="match status" value="1"/>
</dbReference>
<dbReference type="Pfam" id="PF00711">
    <property type="entry name" value="Defensin_beta"/>
    <property type="match status" value="1"/>
</dbReference>
<dbReference type="SUPFAM" id="SSF57392">
    <property type="entry name" value="Defensin-like"/>
    <property type="match status" value="1"/>
</dbReference>